<organism>
    <name type="scientific">Human T-cell leukemia virus 3 (strain Pyl43)</name>
    <name type="common">HTLV-3</name>
    <dbReference type="NCBI Taxonomy" id="406769"/>
    <lineage>
        <taxon>Viruses</taxon>
        <taxon>Riboviria</taxon>
        <taxon>Pararnavirae</taxon>
        <taxon>Artverviricota</taxon>
        <taxon>Revtraviricetes</taxon>
        <taxon>Ortervirales</taxon>
        <taxon>Retroviridae</taxon>
        <taxon>Orthoretrovirinae</taxon>
        <taxon>Deltaretrovirus</taxon>
        <taxon>Primate T-lymphotropic virus 3</taxon>
    </lineage>
</organism>
<feature type="initiator methionine" description="Removed; by host" evidence="1">
    <location>
        <position position="1"/>
    </location>
</feature>
<feature type="chain" id="PRO_0000260472" description="Gag-Pro-Pol polyprotein" evidence="1">
    <location>
        <begin position="2"/>
        <end position="1440"/>
    </location>
</feature>
<feature type="chain" id="PRO_0000260473" description="Matrix protein p19" evidence="1">
    <location>
        <begin position="2"/>
        <end position="123"/>
    </location>
</feature>
<feature type="chain" id="PRO_0000260474" description="Capsid protein p24" evidence="1">
    <location>
        <begin position="124"/>
        <end position="337"/>
    </location>
</feature>
<feature type="chain" id="PRO_0000260475" description="Nucleocapsid protein p15-pro" evidence="1">
    <location>
        <begin position="338"/>
        <end position="430"/>
    </location>
</feature>
<feature type="chain" id="PRO_0000260476" description="Protease" evidence="1">
    <location>
        <begin position="431"/>
        <end position="553"/>
    </location>
</feature>
<feature type="peptide" id="PRO_0000260477" description="p1" evidence="1">
    <location>
        <begin position="554"/>
        <end position="561"/>
    </location>
</feature>
<feature type="chain" id="PRO_0000260478" description="Reverse transcriptase/ribonuclease H" evidence="1">
    <location>
        <begin position="562"/>
        <end position="1145"/>
    </location>
</feature>
<feature type="chain" id="PRO_0000260479" description="Integrase" evidence="1">
    <location>
        <begin position="1146"/>
        <end position="1440"/>
    </location>
</feature>
<feature type="domain" description="Peptidase A2" evidence="4">
    <location>
        <begin position="457"/>
        <end position="535"/>
    </location>
</feature>
<feature type="domain" description="Reverse transcriptase" evidence="5">
    <location>
        <begin position="593"/>
        <end position="783"/>
    </location>
</feature>
<feature type="domain" description="RNase H type-1" evidence="6">
    <location>
        <begin position="1010"/>
        <end position="1143"/>
    </location>
</feature>
<feature type="domain" description="Integrase catalytic" evidence="7">
    <location>
        <begin position="1197"/>
        <end position="1366"/>
    </location>
</feature>
<feature type="zinc finger region" description="CCHC-type 1" evidence="3">
    <location>
        <begin position="349"/>
        <end position="366"/>
    </location>
</feature>
<feature type="zinc finger region" description="CCHC-type 2" evidence="3">
    <location>
        <begin position="372"/>
        <end position="389"/>
    </location>
</feature>
<feature type="DNA-binding region" description="Integrase-type" evidence="8">
    <location>
        <begin position="1371"/>
        <end position="1420"/>
    </location>
</feature>
<feature type="region of interest" description="Disordered" evidence="10">
    <location>
        <begin position="93"/>
        <end position="117"/>
    </location>
</feature>
<feature type="short sequence motif" description="PTAP/PSAP motif">
    <location>
        <begin position="98"/>
        <end position="101"/>
    </location>
</feature>
<feature type="short sequence motif" description="PPXY motif">
    <location>
        <begin position="109"/>
        <end position="112"/>
    </location>
</feature>
<feature type="compositionally biased region" description="Pro residues" evidence="10">
    <location>
        <begin position="98"/>
        <end position="113"/>
    </location>
</feature>
<feature type="active site" description="For protease activity; shared with dimeric partner" evidence="9">
    <location>
        <position position="462"/>
    </location>
</feature>
<feature type="binding site" evidence="1">
    <location>
        <position position="659"/>
    </location>
    <ligand>
        <name>Mg(2+)</name>
        <dbReference type="ChEBI" id="CHEBI:18420"/>
        <label>1</label>
        <note>catalytic; for reverse transcriptase activity</note>
    </ligand>
</feature>
<feature type="binding site" evidence="1">
    <location>
        <position position="734"/>
    </location>
    <ligand>
        <name>Mg(2+)</name>
        <dbReference type="ChEBI" id="CHEBI:18420"/>
        <label>1</label>
        <note>catalytic; for reverse transcriptase activity</note>
    </ligand>
</feature>
<feature type="binding site" evidence="1">
    <location>
        <position position="735"/>
    </location>
    <ligand>
        <name>Mg(2+)</name>
        <dbReference type="ChEBI" id="CHEBI:18420"/>
        <label>1</label>
        <note>catalytic; for reverse transcriptase activity</note>
    </ligand>
</feature>
<feature type="binding site" evidence="1">
    <location>
        <position position="1019"/>
    </location>
    <ligand>
        <name>Mg(2+)</name>
        <dbReference type="ChEBI" id="CHEBI:18420"/>
        <label>2</label>
        <note>catalytic; for RNase H activity</note>
    </ligand>
</feature>
<feature type="binding site" evidence="1">
    <location>
        <position position="1052"/>
    </location>
    <ligand>
        <name>Mg(2+)</name>
        <dbReference type="ChEBI" id="CHEBI:18420"/>
        <label>2</label>
        <note>catalytic; for RNase H activity</note>
    </ligand>
</feature>
<feature type="binding site" evidence="1">
    <location>
        <position position="1074"/>
    </location>
    <ligand>
        <name>Mg(2+)</name>
        <dbReference type="ChEBI" id="CHEBI:18420"/>
        <label>2</label>
        <note>catalytic; for RNase H activity</note>
    </ligand>
</feature>
<feature type="binding site" evidence="1">
    <location>
        <position position="1135"/>
    </location>
    <ligand>
        <name>Mg(2+)</name>
        <dbReference type="ChEBI" id="CHEBI:18420"/>
        <label>2</label>
        <note>catalytic; for RNase H activity</note>
    </ligand>
</feature>
<feature type="binding site" evidence="1">
    <location>
        <position position="1208"/>
    </location>
    <ligand>
        <name>Mg(2+)</name>
        <dbReference type="ChEBI" id="CHEBI:18420"/>
        <label>3</label>
        <note>catalytic; for integrase activity</note>
    </ligand>
</feature>
<feature type="binding site" evidence="1">
    <location>
        <position position="1265"/>
    </location>
    <ligand>
        <name>Mg(2+)</name>
        <dbReference type="ChEBI" id="CHEBI:18420"/>
        <label>3</label>
        <note>catalytic; for integrase activity</note>
    </ligand>
</feature>
<feature type="site" description="Cleavage; by viral protease" evidence="1">
    <location>
        <begin position="123"/>
        <end position="124"/>
    </location>
</feature>
<feature type="site" description="Cleavage; by viral protease" evidence="1">
    <location>
        <begin position="337"/>
        <end position="338"/>
    </location>
</feature>
<feature type="site" description="Cleavage; by viral protease" evidence="1">
    <location>
        <begin position="430"/>
        <end position="431"/>
    </location>
</feature>
<feature type="site" description="Cleavage; by viral protease" evidence="1">
    <location>
        <begin position="553"/>
        <end position="554"/>
    </location>
</feature>
<feature type="site" description="Cleavage; by viral protease" evidence="1">
    <location>
        <begin position="561"/>
        <end position="562"/>
    </location>
</feature>
<feature type="site" description="Cleavage; by viral protease" evidence="1">
    <location>
        <begin position="1145"/>
        <end position="1146"/>
    </location>
</feature>
<feature type="lipid moiety-binding region" description="N-myristoyl glycine; by host" evidence="1">
    <location>
        <position position="2"/>
    </location>
</feature>
<name>POL_HTL3P</name>
<sequence length="1440" mass="159918">MGKTYSSPVNPIPKAPKGLAIHHWLNFLQAAYRLQPGPSEFDFHQLRKFLKLAIKTPVWLNPINYSVLARLIPKNYPGRVHEIVAILIQETPAREAPPSAPPADDPQKPPPYPEHAQVEPQCLPVLHPHGAPATHRPWQMKDLQAIKQEVSSSAPGSPQFMQTVRLAVQQFDPTAKDLHDLLQYLCSSLVASLHHQQLETLIAQAETQGITGYNPLAGPLRVQANNPNQQGLRREYQNLWLSAFSALPGNTKDPTWAAILQGPEEPFCSFVERLNVALDNGLPEGTPKDPILRSLAYSNANKECQKLLQARGQTNSPLGEMLRACQTWTPRDKNKILMIQPKKTPPPNQPCFRCGQAGHWSRDCKQPRPPPGPCPLCQDPAHWKQDCPQLKADTKGSEDLLLDLPCEASHVRERKNLLRGGGLTSPRTILPLIPLSQQRQPILHVQVSFSNTSPVGVQALLDTGADITVLPAYLCPPDSNLQDTTVLGAGGPSTSKFKILPRPVHIHLPFRKQPVTLTSCLIDTNDQWTILGRDALQQCQSSLYLADQPSSVLPVQTPKLIGLEHLPPPPEVSQFPLNPERLQALTDLVSRALEAKHIEPYQGPGNNPIFPVKKPNGKWRFIHDLRATNSLTRDLASPSPGPPDLTSLPQDLPHLRTIDLTDAFFQIPLPAVFQPYFAFTLPQPNNHGPGTRYSWRVLPQGFKNSPTLFEQQLSHILAPVRKAFPNSLIIQYMDDILLASPALRELTALTDKVTNALTKEGLPMSLEKTQATPGSIHFLGQVISPDCITYETLPSIHVKSIWSLAELQSMLGELQWVSKGTPVLRSSLHQLYLALRGHRDPRDTIELTSTQVQALKTIQKALALNCRSRLVSQLPILALIILRPTGTTAVLFQTKQKWPLVWLHTPHPATSLRPWGQLLANAIITLDKYSLQHYGQICKSFHHNISNQALTYYLHTSDQSSVAILLQHSHRFHNLGAQPSGPWRSLLQVPQIFQNIDVLRPPFIISPVVIDHAPCLFSDGATSKAAFILWDKQVIHQQVLPLPSTCSAQAGELFGLLAGLQKSKPWPALNIFLDSKFLIGHLRRMALGAFLGPSTQCDLHARLFPLLQGKTVYVHHVRSHTLLQDPISRLNEATDALMLAPLLPLNPTTLHQITHCNPHALRNHGATASEAHAIVQACHTCKVINPQGRLPQGYIRRGHAPNVIWQGDVTHLHYKRYKYCLLVWVDTYSGVVSVSCRRKETGSDCVVSLLAAISILGKPHSINTDNGTAYLSQEFQQFCSSLSIKHSTHVPYNPTSSGLVERTNGILKTLISKYLLDNHHLPLETAISKSLWTINHLNVLPSCQKTRWQLHQAQPLPSIPENTLPPRASPKWYYYKIPGLTNPRWSGPVQSLKEAAGAALIPVGGSHLWIPWRLLKRGICPRPESNAVADPETKDHQLHG</sequence>
<evidence type="ECO:0000250" key="1"/>
<evidence type="ECO:0000250" key="2">
    <source>
        <dbReference type="UniProtKB" id="P03363"/>
    </source>
</evidence>
<evidence type="ECO:0000255" key="3">
    <source>
        <dbReference type="PROSITE-ProRule" id="PRU00047"/>
    </source>
</evidence>
<evidence type="ECO:0000255" key="4">
    <source>
        <dbReference type="PROSITE-ProRule" id="PRU00275"/>
    </source>
</evidence>
<evidence type="ECO:0000255" key="5">
    <source>
        <dbReference type="PROSITE-ProRule" id="PRU00405"/>
    </source>
</evidence>
<evidence type="ECO:0000255" key="6">
    <source>
        <dbReference type="PROSITE-ProRule" id="PRU00408"/>
    </source>
</evidence>
<evidence type="ECO:0000255" key="7">
    <source>
        <dbReference type="PROSITE-ProRule" id="PRU00457"/>
    </source>
</evidence>
<evidence type="ECO:0000255" key="8">
    <source>
        <dbReference type="PROSITE-ProRule" id="PRU00506"/>
    </source>
</evidence>
<evidence type="ECO:0000255" key="9">
    <source>
        <dbReference type="PROSITE-ProRule" id="PRU10094"/>
    </source>
</evidence>
<evidence type="ECO:0000256" key="10">
    <source>
        <dbReference type="SAM" id="MobiDB-lite"/>
    </source>
</evidence>
<evidence type="ECO:0000305" key="11"/>
<accession>Q4U0X6</accession>
<reference key="1">
    <citation type="journal article" date="2006" name="J. Virol.">
        <title>Human T-cell lymphotropic virus type 3: complete nucleotide sequence and characterization of the human tax3 protein.</title>
        <authorList>
            <person name="Calattini S."/>
            <person name="Chevalier S.A."/>
            <person name="Duprez R."/>
            <person name="Afonso P."/>
            <person name="Froment A."/>
            <person name="Gessain A."/>
            <person name="Mahieux R."/>
        </authorList>
    </citation>
    <scope>NUCLEOTIDE SEQUENCE [GENOMIC DNA]</scope>
</reference>
<organismHost>
    <name type="scientific">Homo sapiens</name>
    <name type="common">Human</name>
    <dbReference type="NCBI Taxonomy" id="9606"/>
</organismHost>
<protein>
    <recommendedName>
        <fullName>Gag-Pro-Pol polyprotein</fullName>
    </recommendedName>
    <alternativeName>
        <fullName>Pr160Gag-Pro-Pol</fullName>
    </alternativeName>
    <component>
        <recommendedName>
            <fullName>Matrix protein p19</fullName>
            <shortName>MA</shortName>
        </recommendedName>
    </component>
    <component>
        <recommendedName>
            <fullName>Capsid protein p24</fullName>
            <shortName>CA</shortName>
        </recommendedName>
    </component>
    <component>
        <recommendedName>
            <fullName>Nucleocapsid protein p15-pro</fullName>
            <shortName>NC'</shortName>
            <shortName>NC-pro</shortName>
        </recommendedName>
    </component>
    <component>
        <recommendedName>
            <fullName>Protease</fullName>
            <shortName>PR</shortName>
            <ecNumber>3.4.23.-</ecNumber>
        </recommendedName>
    </component>
    <component>
        <recommendedName>
            <fullName>p1</fullName>
        </recommendedName>
    </component>
    <component>
        <recommendedName>
            <fullName>Reverse transcriptase/ribonuclease H</fullName>
            <shortName>RT</shortName>
            <ecNumber>2.7.7.49</ecNumber>
            <ecNumber>2.7.7.7</ecNumber>
            <ecNumber>3.1.26.4</ecNumber>
        </recommendedName>
    </component>
    <component>
        <recommendedName>
            <fullName>Integrase</fullName>
            <shortName>IN</shortName>
            <ecNumber evidence="2">2.7.7.-</ecNumber>
            <ecNumber evidence="2">3.1.-.-</ecNumber>
        </recommendedName>
    </component>
</protein>
<comment type="function">
    <text evidence="1">Matrix protein p19 targets Gag, Gag-Pro and Gag-Pro-Pol polyproteins to the plasma membrane via a multipartite membrane binding signal, that includes its myristoylated N-terminus. Also mediates nuclear localization of the preintegration complex (By similarity).</text>
</comment>
<comment type="function">
    <text evidence="1">Capsid protein p24 forms the conical core of the virus that encapsulates the genomic RNA-nucleocapsid complex.</text>
</comment>
<comment type="function">
    <text evidence="1">Nucleocapsid protein p15 is involved in the packaging and encapsidation of two copies of the genome.</text>
</comment>
<comment type="function">
    <text evidence="1">The aspartyl protease mediates proteolytic cleavages of Gag, Gag-Pro and Gag-Pro-Pol polyproteins during or shortly after the release of the virion from the plasma membrane. Cleavages take place as an ordered, step-wise cascade to yield mature proteins. This process is called maturation. Displays maximal activity during the budding process just prior to particle release from the cell. Hydrolyzes host EIF4GI in order to shut off the capped cellular mRNA translation. The resulting inhibition of cellular protein synthesis serves to ensure maximal viral gene expression and to evade host immune response (By similarity).</text>
</comment>
<comment type="function">
    <text evidence="1">Reverse transcriptase (RT) is a multifunctional enzyme that converts the viral RNA genome into dsDNA in the cytoplasm, shortly after virus entry into the cell. This enzyme displays a DNA polymerase activity that can copy either DNA or RNA templates, and a ribonuclease H (RNase H) activity that cleaves the RNA strand of RNA-DNA heteroduplexes in a partially processive 3' to 5'-endonucleasic mode. Conversion of viral genomic RNA into dsDNA requires many steps. A tRNA-Pro binds to the primer-binding site (PBS) situated at the 5'-end of the viral RNA. RT uses the 3' end of the tRNA primer to perform a short round of RNA-dependent minus-strand DNA synthesis. The reading proceeds through the U5 region and ends after the repeated (R) region which is present at both ends of viral RNA. The portion of the RNA-DNA heteroduplex is digested by the RNase H, resulting in a ssDNA product attached to the tRNA primer. This ssDNA/tRNA hybridizes with the identical R region situated at the 3' end of viral RNA. This template exchange, known as minus-strand DNA strong stop transfer, can be either intra- or intermolecular. RT uses the 3' end of this newly synthesized short ssDNA to perform the RNA-dependent minus-strand DNA synthesis of the whole template. RNase H digests the RNA template except for a polypurine tract (PPT) situated at the 5' end of the genome. It is not clear if both polymerase and RNase H activities are simultaneous. RNase H probably can proceed both in a polymerase-dependent (RNA cut into small fragments by the same RT performing DNA synthesis) and a polymerase-independent mode (cleavage of remaining RNA fragments by free RTs). Secondly, RT performs DNA-directed plus-strand DNA synthesis using the PPT that has not been removed by RNase H as primer. PPT and tRNA primers are then removed by RNase H. The 3' and 5' ssDNA PBS regions hybridize to form a circular dsDNA intermediate. Strand displacement synthesis by RT to the PBS and PPT ends produces a blunt ended, linear dsDNA copy of the viral genome that includes long terminal repeats (LTRs) at both ends (By similarity).</text>
</comment>
<comment type="function">
    <text evidence="1">Integrase catalyzes viral DNA integration into the host chromosome, by performing a series of DNA cutting and joining reactions. This enzyme activity takes place after virion entry into a cell and reverse transcription of the RNA genome in dsDNA. The first step in the integration process is 3' processing. This step requires a complex comprising the viral genome, matrix protein, and integrase. This complex is called the pre-integration complex (PIC). The integrase protein removes 2 nucleotides from each 3' end of the viral DNA, leaving recessed dinucleotides OH's at the 3' ends. In the second step, the PIC access cell chromosomes during cell division. The third step, termed strand transfer, the integrase protein joins the previously processed 3' ends to the 5'-ends of strands of target cellular DNA at the site of integration. The 5'-ends are produced by integrase-catalyzed staggered cuts, 5 bp apart. A Y-shaped, gapped, recombination intermediate results, with the 5'-ends of the viral DNA strands and the 3' ends of target DNA strands remaining unjoined, flanking a gap of 5 bp. The last step is viral DNA integration into host chromosome. This involves host DNA repair synthesis in which the 5 bp gaps between the unjoined strands (see above) are filled in and then ligated (By similarity).</text>
</comment>
<comment type="catalytic activity">
    <reaction evidence="6">
        <text>Endonucleolytic cleavage to 5'-phosphomonoester.</text>
        <dbReference type="EC" id="3.1.26.4"/>
    </reaction>
</comment>
<comment type="catalytic activity">
    <reaction evidence="5">
        <text>DNA(n) + a 2'-deoxyribonucleoside 5'-triphosphate = DNA(n+1) + diphosphate</text>
        <dbReference type="Rhea" id="RHEA:22508"/>
        <dbReference type="Rhea" id="RHEA-COMP:17339"/>
        <dbReference type="Rhea" id="RHEA-COMP:17340"/>
        <dbReference type="ChEBI" id="CHEBI:33019"/>
        <dbReference type="ChEBI" id="CHEBI:61560"/>
        <dbReference type="ChEBI" id="CHEBI:173112"/>
        <dbReference type="EC" id="2.7.7.49"/>
    </reaction>
</comment>
<comment type="catalytic activity">
    <reaction evidence="5">
        <text>DNA(n) + a 2'-deoxyribonucleoside 5'-triphosphate = DNA(n+1) + diphosphate</text>
        <dbReference type="Rhea" id="RHEA:22508"/>
        <dbReference type="Rhea" id="RHEA-COMP:17339"/>
        <dbReference type="Rhea" id="RHEA-COMP:17340"/>
        <dbReference type="ChEBI" id="CHEBI:33019"/>
        <dbReference type="ChEBI" id="CHEBI:61560"/>
        <dbReference type="ChEBI" id="CHEBI:173112"/>
        <dbReference type="EC" id="2.7.7.7"/>
    </reaction>
</comment>
<comment type="cofactor">
    <cofactor evidence="1">
        <name>Mg(2+)</name>
        <dbReference type="ChEBI" id="CHEBI:18420"/>
    </cofactor>
    <text evidence="1">Binds 2 magnesium ions for reverse transcriptase polymerase activity.</text>
</comment>
<comment type="cofactor">
    <cofactor evidence="1">
        <name>Mg(2+)</name>
        <dbReference type="ChEBI" id="CHEBI:18420"/>
    </cofactor>
    <text evidence="1">Binds 2 magnesium ions for ribonuclease H (RNase H) activity.</text>
</comment>
<comment type="subunit">
    <text evidence="1">Interacts with human TSG101. This interaction is essential for budding and release of viral particles (By similarity).</text>
</comment>
<comment type="subcellular location">
    <molecule>Matrix protein p19</molecule>
    <subcellularLocation>
        <location evidence="11">Virion</location>
    </subcellularLocation>
</comment>
<comment type="subcellular location">
    <molecule>Capsid protein p24</molecule>
    <subcellularLocation>
        <location evidence="11">Virion</location>
    </subcellularLocation>
</comment>
<comment type="subcellular location">
    <molecule>Nucleocapsid protein p15-pro</molecule>
    <subcellularLocation>
        <location evidence="11">Virion</location>
    </subcellularLocation>
</comment>
<comment type="alternative products">
    <event type="ribosomal frameshifting"/>
    <isoform>
        <id>Q4U0X6-1</id>
        <name>Gag-Pol polyprotein</name>
        <sequence type="displayed"/>
    </isoform>
    <isoform>
        <id>Q09SZ9-1</id>
        <name>Gag-Pro polyprotein</name>
        <sequence type="external"/>
    </isoform>
    <isoform>
        <id>Q09T00-1</id>
        <name>Gag polyprotein</name>
        <sequence type="external"/>
    </isoform>
    <text>This strategy of translation probably allows the virus to modulate the quantity of each viral protein.</text>
</comment>
<comment type="domain">
    <text evidence="1">Late-budding domains (L domains) are short sequence motifs essential for viral particle release. They can occur individually or in close proximity within structural proteins. They interacts with sorting cellular proteins of the multivesicular body (MVB) pathway. Most of these proteins are class E vacuolar protein sorting factors belonging to ESCRT-I, ESCRT-II or ESCRT-III complexes. Matrix protein p19 contains two L domains: a PTAP/PSAP motif which interacts with the UEV domain of TSG101, and a PPXY motif which binds to the WW domains of HECT (homologous to E6-AP C-terminus) E3 ubiquitin ligases (By similarity).</text>
</comment>
<comment type="domain">
    <text evidence="1">The capsid protein N-terminus seems to be involved in Gag-Gag interactions.</text>
</comment>
<comment type="PTM">
    <text evidence="1">Specific enzymatic cleavages by the viral protease yield mature proteins. The polyprotein is cleaved during and after budding, this process is termed maturation. The protease is autoproteolytically processed at its N- and C-termini (By similarity).</text>
</comment>
<comment type="miscellaneous">
    <text evidence="1">The reverse transcriptase is an error-prone enzyme that lacks a proof-reading function. High mutations rate is a direct consequence of this characteristic. RT also displays frequent template switching leading to high recombination rate. Recombination mostly occurs between homologous regions of the two copackaged RNA genomes. If these two RNA molecules derive from different viral strains, reverse transcription will give rise to highly recombinated proviral DNAs (By similarity).</text>
</comment>
<comment type="miscellaneous">
    <molecule>Isoform Gag-Pol polyprotein</molecule>
    <text>Produced by -1 ribosomal frameshifting at the gag-pol genes boundary.</text>
</comment>
<proteinExistence type="inferred from homology"/>
<dbReference type="EC" id="3.4.23.-"/>
<dbReference type="EC" id="2.7.7.49"/>
<dbReference type="EC" id="2.7.7.7"/>
<dbReference type="EC" id="3.1.26.4"/>
<dbReference type="EC" id="2.7.7.-" evidence="2"/>
<dbReference type="EC" id="3.1.-.-" evidence="2"/>
<dbReference type="EMBL" id="DQ462191">
    <property type="protein sequence ID" value="AAY34569.2"/>
    <property type="status" value="ALT_SEQ"/>
    <property type="molecule type" value="Genomic_DNA"/>
</dbReference>
<dbReference type="SMR" id="Q4U0X6"/>
<dbReference type="Proteomes" id="UP000007684">
    <property type="component" value="Genome"/>
</dbReference>
<dbReference type="GO" id="GO:0019013">
    <property type="term" value="C:viral nucleocapsid"/>
    <property type="evidence" value="ECO:0007669"/>
    <property type="project" value="UniProtKB-KW"/>
</dbReference>
<dbReference type="GO" id="GO:0004190">
    <property type="term" value="F:aspartic-type endopeptidase activity"/>
    <property type="evidence" value="ECO:0007669"/>
    <property type="project" value="UniProtKB-KW"/>
</dbReference>
<dbReference type="GO" id="GO:0003677">
    <property type="term" value="F:DNA binding"/>
    <property type="evidence" value="ECO:0007669"/>
    <property type="project" value="UniProtKB-KW"/>
</dbReference>
<dbReference type="GO" id="GO:0003887">
    <property type="term" value="F:DNA-directed DNA polymerase activity"/>
    <property type="evidence" value="ECO:0007669"/>
    <property type="project" value="UniProtKB-EC"/>
</dbReference>
<dbReference type="GO" id="GO:0035613">
    <property type="term" value="F:RNA stem-loop binding"/>
    <property type="evidence" value="ECO:0007669"/>
    <property type="project" value="TreeGrafter"/>
</dbReference>
<dbReference type="GO" id="GO:0003964">
    <property type="term" value="F:RNA-directed DNA polymerase activity"/>
    <property type="evidence" value="ECO:0007669"/>
    <property type="project" value="UniProtKB-KW"/>
</dbReference>
<dbReference type="GO" id="GO:0004523">
    <property type="term" value="F:RNA-DNA hybrid ribonuclease activity"/>
    <property type="evidence" value="ECO:0007669"/>
    <property type="project" value="UniProtKB-EC"/>
</dbReference>
<dbReference type="GO" id="GO:0005198">
    <property type="term" value="F:structural molecule activity"/>
    <property type="evidence" value="ECO:0007669"/>
    <property type="project" value="InterPro"/>
</dbReference>
<dbReference type="GO" id="GO:0008270">
    <property type="term" value="F:zinc ion binding"/>
    <property type="evidence" value="ECO:0007669"/>
    <property type="project" value="UniProtKB-KW"/>
</dbReference>
<dbReference type="GO" id="GO:0015074">
    <property type="term" value="P:DNA integration"/>
    <property type="evidence" value="ECO:0007669"/>
    <property type="project" value="UniProtKB-KW"/>
</dbReference>
<dbReference type="GO" id="GO:0006310">
    <property type="term" value="P:DNA recombination"/>
    <property type="evidence" value="ECO:0007669"/>
    <property type="project" value="UniProtKB-KW"/>
</dbReference>
<dbReference type="GO" id="GO:0075713">
    <property type="term" value="P:establishment of integrated proviral latency"/>
    <property type="evidence" value="ECO:0007669"/>
    <property type="project" value="UniProtKB-KW"/>
</dbReference>
<dbReference type="GO" id="GO:0006508">
    <property type="term" value="P:proteolysis"/>
    <property type="evidence" value="ECO:0007669"/>
    <property type="project" value="UniProtKB-KW"/>
</dbReference>
<dbReference type="GO" id="GO:0046718">
    <property type="term" value="P:symbiont entry into host cell"/>
    <property type="evidence" value="ECO:0007669"/>
    <property type="project" value="UniProtKB-KW"/>
</dbReference>
<dbReference type="GO" id="GO:0039657">
    <property type="term" value="P:symbiont-mediated suppression of host gene expression"/>
    <property type="evidence" value="ECO:0007669"/>
    <property type="project" value="UniProtKB-KW"/>
</dbReference>
<dbReference type="GO" id="GO:0044826">
    <property type="term" value="P:viral genome integration into host DNA"/>
    <property type="evidence" value="ECO:0007669"/>
    <property type="project" value="UniProtKB-KW"/>
</dbReference>
<dbReference type="GO" id="GO:0075523">
    <property type="term" value="P:viral translational frameshifting"/>
    <property type="evidence" value="ECO:0007669"/>
    <property type="project" value="UniProtKB-KW"/>
</dbReference>
<dbReference type="Gene3D" id="1.10.1200.30">
    <property type="match status" value="1"/>
</dbReference>
<dbReference type="Gene3D" id="3.30.70.270">
    <property type="match status" value="2"/>
</dbReference>
<dbReference type="Gene3D" id="2.40.70.10">
    <property type="entry name" value="Acid Proteases"/>
    <property type="match status" value="1"/>
</dbReference>
<dbReference type="Gene3D" id="1.10.185.10">
    <property type="entry name" value="Delta-retroviral matrix"/>
    <property type="match status" value="1"/>
</dbReference>
<dbReference type="Gene3D" id="3.10.10.10">
    <property type="entry name" value="HIV Type 1 Reverse Transcriptase, subunit A, domain 1"/>
    <property type="match status" value="1"/>
</dbReference>
<dbReference type="Gene3D" id="1.10.375.10">
    <property type="entry name" value="Human Immunodeficiency Virus Type 1 Capsid Protein"/>
    <property type="match status" value="1"/>
</dbReference>
<dbReference type="Gene3D" id="3.30.420.10">
    <property type="entry name" value="Ribonuclease H-like superfamily/Ribonuclease H"/>
    <property type="match status" value="2"/>
</dbReference>
<dbReference type="Gene3D" id="4.10.60.10">
    <property type="entry name" value="Zinc finger, CCHC-type"/>
    <property type="match status" value="1"/>
</dbReference>
<dbReference type="InterPro" id="IPR001969">
    <property type="entry name" value="Aspartic_peptidase_AS"/>
</dbReference>
<dbReference type="InterPro" id="IPR003139">
    <property type="entry name" value="D_retro_matrix"/>
</dbReference>
<dbReference type="InterPro" id="IPR043502">
    <property type="entry name" value="DNA/RNA_pol_sf"/>
</dbReference>
<dbReference type="InterPro" id="IPR045345">
    <property type="entry name" value="Gag_p24_C"/>
</dbReference>
<dbReference type="InterPro" id="IPR001037">
    <property type="entry name" value="Integrase_C_retrovir"/>
</dbReference>
<dbReference type="InterPro" id="IPR001584">
    <property type="entry name" value="Integrase_cat-core"/>
</dbReference>
<dbReference type="InterPro" id="IPR003308">
    <property type="entry name" value="Integrase_Zn-bd_dom_N"/>
</dbReference>
<dbReference type="InterPro" id="IPR001995">
    <property type="entry name" value="Peptidase_A2_cat"/>
</dbReference>
<dbReference type="InterPro" id="IPR021109">
    <property type="entry name" value="Peptidase_aspartic_dom_sf"/>
</dbReference>
<dbReference type="InterPro" id="IPR018061">
    <property type="entry name" value="Retropepsins"/>
</dbReference>
<dbReference type="InterPro" id="IPR008916">
    <property type="entry name" value="Retrov_capsid_C"/>
</dbReference>
<dbReference type="InterPro" id="IPR008919">
    <property type="entry name" value="Retrov_capsid_N"/>
</dbReference>
<dbReference type="InterPro" id="IPR010999">
    <property type="entry name" value="Retrovr_matrix"/>
</dbReference>
<dbReference type="InterPro" id="IPR043128">
    <property type="entry name" value="Rev_trsase/Diguanyl_cyclase"/>
</dbReference>
<dbReference type="InterPro" id="IPR012337">
    <property type="entry name" value="RNaseH-like_sf"/>
</dbReference>
<dbReference type="InterPro" id="IPR002156">
    <property type="entry name" value="RNaseH_domain"/>
</dbReference>
<dbReference type="InterPro" id="IPR036397">
    <property type="entry name" value="RNaseH_sf"/>
</dbReference>
<dbReference type="InterPro" id="IPR000477">
    <property type="entry name" value="RT_dom"/>
</dbReference>
<dbReference type="InterPro" id="IPR001878">
    <property type="entry name" value="Znf_CCHC"/>
</dbReference>
<dbReference type="InterPro" id="IPR036875">
    <property type="entry name" value="Znf_CCHC_sf"/>
</dbReference>
<dbReference type="PANTHER" id="PTHR41694">
    <property type="entry name" value="ENDOGENOUS RETROVIRUS GROUP K MEMBER POL PROTEIN"/>
    <property type="match status" value="1"/>
</dbReference>
<dbReference type="PANTHER" id="PTHR41694:SF3">
    <property type="entry name" value="RNA-DIRECTED DNA POLYMERASE-RELATED"/>
    <property type="match status" value="1"/>
</dbReference>
<dbReference type="Pfam" id="PF02228">
    <property type="entry name" value="Gag_p19"/>
    <property type="match status" value="1"/>
</dbReference>
<dbReference type="Pfam" id="PF00607">
    <property type="entry name" value="Gag_p24"/>
    <property type="match status" value="1"/>
</dbReference>
<dbReference type="Pfam" id="PF19317">
    <property type="entry name" value="Gag_p24_C"/>
    <property type="match status" value="1"/>
</dbReference>
<dbReference type="Pfam" id="PF00552">
    <property type="entry name" value="IN_DBD_C"/>
    <property type="match status" value="1"/>
</dbReference>
<dbReference type="Pfam" id="PF02022">
    <property type="entry name" value="Integrase_Zn"/>
    <property type="match status" value="1"/>
</dbReference>
<dbReference type="Pfam" id="PF00665">
    <property type="entry name" value="rve"/>
    <property type="match status" value="1"/>
</dbReference>
<dbReference type="Pfam" id="PF00077">
    <property type="entry name" value="RVP"/>
    <property type="match status" value="1"/>
</dbReference>
<dbReference type="Pfam" id="PF00078">
    <property type="entry name" value="RVT_1"/>
    <property type="match status" value="1"/>
</dbReference>
<dbReference type="Pfam" id="PF00098">
    <property type="entry name" value="zf-CCHC"/>
    <property type="match status" value="1"/>
</dbReference>
<dbReference type="SMART" id="SM00343">
    <property type="entry name" value="ZnF_C2HC"/>
    <property type="match status" value="2"/>
</dbReference>
<dbReference type="SUPFAM" id="SSF50630">
    <property type="entry name" value="Acid proteases"/>
    <property type="match status" value="1"/>
</dbReference>
<dbReference type="SUPFAM" id="SSF56672">
    <property type="entry name" value="DNA/RNA polymerases"/>
    <property type="match status" value="1"/>
</dbReference>
<dbReference type="SUPFAM" id="SSF47836">
    <property type="entry name" value="Retroviral matrix proteins"/>
    <property type="match status" value="1"/>
</dbReference>
<dbReference type="SUPFAM" id="SSF47353">
    <property type="entry name" value="Retrovirus capsid dimerization domain-like"/>
    <property type="match status" value="1"/>
</dbReference>
<dbReference type="SUPFAM" id="SSF47943">
    <property type="entry name" value="Retrovirus capsid protein, N-terminal core domain"/>
    <property type="match status" value="1"/>
</dbReference>
<dbReference type="SUPFAM" id="SSF57756">
    <property type="entry name" value="Retrovirus zinc finger-like domains"/>
    <property type="match status" value="1"/>
</dbReference>
<dbReference type="SUPFAM" id="SSF53098">
    <property type="entry name" value="Ribonuclease H-like"/>
    <property type="match status" value="1"/>
</dbReference>
<dbReference type="PROSITE" id="PS50175">
    <property type="entry name" value="ASP_PROT_RETROV"/>
    <property type="match status" value="1"/>
</dbReference>
<dbReference type="PROSITE" id="PS00141">
    <property type="entry name" value="ASP_PROTEASE"/>
    <property type="match status" value="1"/>
</dbReference>
<dbReference type="PROSITE" id="PS50994">
    <property type="entry name" value="INTEGRASE"/>
    <property type="match status" value="1"/>
</dbReference>
<dbReference type="PROSITE" id="PS51027">
    <property type="entry name" value="INTEGRASE_DBD"/>
    <property type="match status" value="1"/>
</dbReference>
<dbReference type="PROSITE" id="PS50879">
    <property type="entry name" value="RNASE_H_1"/>
    <property type="match status" value="1"/>
</dbReference>
<dbReference type="PROSITE" id="PS50878">
    <property type="entry name" value="RT_POL"/>
    <property type="match status" value="1"/>
</dbReference>
<dbReference type="PROSITE" id="PS50158">
    <property type="entry name" value="ZF_CCHC"/>
    <property type="match status" value="1"/>
</dbReference>
<keyword id="KW-0064">Aspartyl protease</keyword>
<keyword id="KW-0167">Capsid protein</keyword>
<keyword id="KW-0229">DNA integration</keyword>
<keyword id="KW-0233">DNA recombination</keyword>
<keyword id="KW-0238">DNA-binding</keyword>
<keyword id="KW-0255">Endonuclease</keyword>
<keyword id="KW-1262">Eukaryotic host gene expression shutoff by virus</keyword>
<keyword id="KW-1193">Eukaryotic host translation shutoff by virus</keyword>
<keyword id="KW-1190">Host gene expression shutoff by virus</keyword>
<keyword id="KW-0945">Host-virus interaction</keyword>
<keyword id="KW-0378">Hydrolase</keyword>
<keyword id="KW-0449">Lipoprotein</keyword>
<keyword id="KW-0460">Magnesium</keyword>
<keyword id="KW-0479">Metal-binding</keyword>
<keyword id="KW-0511">Multifunctional enzyme</keyword>
<keyword id="KW-0519">Myristate</keyword>
<keyword id="KW-0540">Nuclease</keyword>
<keyword id="KW-0548">Nucleotidyltransferase</keyword>
<keyword id="KW-0645">Protease</keyword>
<keyword id="KW-0677">Repeat</keyword>
<keyword id="KW-0688">Ribosomal frameshifting</keyword>
<keyword id="KW-0695">RNA-directed DNA polymerase</keyword>
<keyword id="KW-0808">Transferase</keyword>
<keyword id="KW-1179">Viral genome integration</keyword>
<keyword id="KW-0543">Viral nucleoprotein</keyword>
<keyword id="KW-0946">Virion</keyword>
<keyword id="KW-1160">Virus entry into host cell</keyword>
<keyword id="KW-0862">Zinc</keyword>
<keyword id="KW-0863">Zinc-finger</keyword>
<gene>
    <name type="primary">gag-pro-pol</name>
</gene>